<sequence length="120" mass="13648">MSKQPDKQRKSQRRAPLHERHKQVRATLSADLREEYGQRNVRVNAGDTVEVLRGDFAGEEGEVINVDLDKAVIHVEDVTLEKTDGEEVPRPLDTSNVRVTDLDLEDEKREARLESEDDSA</sequence>
<gene>
    <name type="primary">rpl24</name>
    <name type="ordered locus">rrnAC1601</name>
</gene>
<dbReference type="EMBL" id="X55311">
    <property type="protein sequence ID" value="CAA39019.1"/>
    <property type="molecule type" value="Genomic_DNA"/>
</dbReference>
<dbReference type="EMBL" id="AY596297">
    <property type="protein sequence ID" value="AAV46518.1"/>
    <property type="molecule type" value="Genomic_DNA"/>
</dbReference>
<dbReference type="PIR" id="S10735">
    <property type="entry name" value="R5HS24"/>
</dbReference>
<dbReference type="PDB" id="1FFK">
    <property type="method" value="X-ray"/>
    <property type="resolution" value="2.40 A"/>
    <property type="chains" value="Q=2-120"/>
</dbReference>
<dbReference type="PDB" id="1JJ2">
    <property type="method" value="X-ray"/>
    <property type="resolution" value="2.40 A"/>
    <property type="chains" value="S=2-120"/>
</dbReference>
<dbReference type="PDB" id="1K73">
    <property type="method" value="X-ray"/>
    <property type="resolution" value="3.01 A"/>
    <property type="chains" value="U=2-120"/>
</dbReference>
<dbReference type="PDB" id="1K8A">
    <property type="method" value="X-ray"/>
    <property type="resolution" value="3.00 A"/>
    <property type="chains" value="U=2-120"/>
</dbReference>
<dbReference type="PDB" id="1K9M">
    <property type="method" value="X-ray"/>
    <property type="resolution" value="3.00 A"/>
    <property type="chains" value="U=2-120"/>
</dbReference>
<dbReference type="PDB" id="1KC8">
    <property type="method" value="X-ray"/>
    <property type="resolution" value="3.01 A"/>
    <property type="chains" value="U=2-120"/>
</dbReference>
<dbReference type="PDB" id="1KD1">
    <property type="method" value="X-ray"/>
    <property type="resolution" value="3.00 A"/>
    <property type="chains" value="U=2-120"/>
</dbReference>
<dbReference type="PDB" id="1KQS">
    <property type="method" value="X-ray"/>
    <property type="resolution" value="3.10 A"/>
    <property type="chains" value="S=2-120"/>
</dbReference>
<dbReference type="PDB" id="1M1K">
    <property type="method" value="X-ray"/>
    <property type="resolution" value="3.20 A"/>
    <property type="chains" value="U=2-120"/>
</dbReference>
<dbReference type="PDB" id="1M90">
    <property type="method" value="X-ray"/>
    <property type="resolution" value="2.80 A"/>
    <property type="chains" value="U=2-120"/>
</dbReference>
<dbReference type="PDB" id="1ML5">
    <property type="method" value="EM"/>
    <property type="resolution" value="14.00 A"/>
    <property type="chains" value="u=2-120"/>
</dbReference>
<dbReference type="PDB" id="1N8R">
    <property type="method" value="X-ray"/>
    <property type="resolution" value="3.00 A"/>
    <property type="chains" value="U=2-120"/>
</dbReference>
<dbReference type="PDB" id="1NJI">
    <property type="method" value="X-ray"/>
    <property type="resolution" value="3.00 A"/>
    <property type="chains" value="U=2-120"/>
</dbReference>
<dbReference type="PDB" id="1Q7Y">
    <property type="method" value="X-ray"/>
    <property type="resolution" value="3.20 A"/>
    <property type="chains" value="U=2-120"/>
</dbReference>
<dbReference type="PDB" id="1Q81">
    <property type="method" value="X-ray"/>
    <property type="resolution" value="2.95 A"/>
    <property type="chains" value="U=2-120"/>
</dbReference>
<dbReference type="PDB" id="1Q82">
    <property type="method" value="X-ray"/>
    <property type="resolution" value="2.98 A"/>
    <property type="chains" value="U=2-120"/>
</dbReference>
<dbReference type="PDB" id="1Q86">
    <property type="method" value="X-ray"/>
    <property type="resolution" value="3.00 A"/>
    <property type="chains" value="U=2-120"/>
</dbReference>
<dbReference type="PDB" id="1QVF">
    <property type="method" value="X-ray"/>
    <property type="resolution" value="3.10 A"/>
    <property type="chains" value="S=2-120"/>
</dbReference>
<dbReference type="PDB" id="1QVG">
    <property type="method" value="X-ray"/>
    <property type="resolution" value="2.90 A"/>
    <property type="chains" value="S=2-120"/>
</dbReference>
<dbReference type="PDB" id="1S72">
    <property type="method" value="X-ray"/>
    <property type="resolution" value="2.40 A"/>
    <property type="chains" value="T=1-120"/>
</dbReference>
<dbReference type="PDB" id="1VQ4">
    <property type="method" value="X-ray"/>
    <property type="resolution" value="2.70 A"/>
    <property type="chains" value="T=1-120"/>
</dbReference>
<dbReference type="PDB" id="1VQ5">
    <property type="method" value="X-ray"/>
    <property type="resolution" value="2.60 A"/>
    <property type="chains" value="T=1-120"/>
</dbReference>
<dbReference type="PDB" id="1VQ6">
    <property type="method" value="X-ray"/>
    <property type="resolution" value="2.70 A"/>
    <property type="chains" value="T=1-120"/>
</dbReference>
<dbReference type="PDB" id="1VQ7">
    <property type="method" value="X-ray"/>
    <property type="resolution" value="2.50 A"/>
    <property type="chains" value="T=1-120"/>
</dbReference>
<dbReference type="PDB" id="1VQ8">
    <property type="method" value="X-ray"/>
    <property type="resolution" value="2.20 A"/>
    <property type="chains" value="T=1-120"/>
</dbReference>
<dbReference type="PDB" id="1VQ9">
    <property type="method" value="X-ray"/>
    <property type="resolution" value="2.40 A"/>
    <property type="chains" value="T=1-120"/>
</dbReference>
<dbReference type="PDB" id="1VQK">
    <property type="method" value="X-ray"/>
    <property type="resolution" value="2.30 A"/>
    <property type="chains" value="T=1-120"/>
</dbReference>
<dbReference type="PDB" id="1VQL">
    <property type="method" value="X-ray"/>
    <property type="resolution" value="2.30 A"/>
    <property type="chains" value="T=1-120"/>
</dbReference>
<dbReference type="PDB" id="1VQM">
    <property type="method" value="X-ray"/>
    <property type="resolution" value="2.30 A"/>
    <property type="chains" value="T=1-120"/>
</dbReference>
<dbReference type="PDB" id="1VQN">
    <property type="method" value="X-ray"/>
    <property type="resolution" value="2.40 A"/>
    <property type="chains" value="T=1-120"/>
</dbReference>
<dbReference type="PDB" id="1VQO">
    <property type="method" value="X-ray"/>
    <property type="resolution" value="2.20 A"/>
    <property type="chains" value="T=1-120"/>
</dbReference>
<dbReference type="PDB" id="1VQP">
    <property type="method" value="X-ray"/>
    <property type="resolution" value="2.25 A"/>
    <property type="chains" value="T=1-120"/>
</dbReference>
<dbReference type="PDB" id="1W2B">
    <property type="method" value="X-ray"/>
    <property type="resolution" value="3.50 A"/>
    <property type="chains" value="S=2-120"/>
</dbReference>
<dbReference type="PDB" id="1YHQ">
    <property type="method" value="X-ray"/>
    <property type="resolution" value="2.40 A"/>
    <property type="chains" value="T=1-120"/>
</dbReference>
<dbReference type="PDB" id="1YI2">
    <property type="method" value="X-ray"/>
    <property type="resolution" value="2.65 A"/>
    <property type="chains" value="T=1-120"/>
</dbReference>
<dbReference type="PDB" id="1YIJ">
    <property type="method" value="X-ray"/>
    <property type="resolution" value="2.60 A"/>
    <property type="chains" value="T=1-120"/>
</dbReference>
<dbReference type="PDB" id="1YIT">
    <property type="method" value="X-ray"/>
    <property type="resolution" value="2.80 A"/>
    <property type="chains" value="T=1-120"/>
</dbReference>
<dbReference type="PDB" id="1YJ9">
    <property type="method" value="X-ray"/>
    <property type="resolution" value="2.90 A"/>
    <property type="chains" value="T=1-120"/>
</dbReference>
<dbReference type="PDB" id="1YJN">
    <property type="method" value="X-ray"/>
    <property type="resolution" value="3.00 A"/>
    <property type="chains" value="T=1-120"/>
</dbReference>
<dbReference type="PDB" id="1YJW">
    <property type="method" value="X-ray"/>
    <property type="resolution" value="2.90 A"/>
    <property type="chains" value="T=1-120"/>
</dbReference>
<dbReference type="PDB" id="2OTJ">
    <property type="method" value="X-ray"/>
    <property type="resolution" value="2.90 A"/>
    <property type="chains" value="T=1-120"/>
</dbReference>
<dbReference type="PDB" id="2OTL">
    <property type="method" value="X-ray"/>
    <property type="resolution" value="2.70 A"/>
    <property type="chains" value="T=1-120"/>
</dbReference>
<dbReference type="PDB" id="2QA4">
    <property type="method" value="X-ray"/>
    <property type="resolution" value="3.00 A"/>
    <property type="chains" value="T=1-120"/>
</dbReference>
<dbReference type="PDB" id="2QEX">
    <property type="method" value="X-ray"/>
    <property type="resolution" value="2.90 A"/>
    <property type="chains" value="T=1-120"/>
</dbReference>
<dbReference type="PDB" id="3CC2">
    <property type="method" value="X-ray"/>
    <property type="resolution" value="2.40 A"/>
    <property type="chains" value="T=1-120"/>
</dbReference>
<dbReference type="PDB" id="3CC4">
    <property type="method" value="X-ray"/>
    <property type="resolution" value="2.70 A"/>
    <property type="chains" value="T=1-120"/>
</dbReference>
<dbReference type="PDB" id="3CC7">
    <property type="method" value="X-ray"/>
    <property type="resolution" value="2.70 A"/>
    <property type="chains" value="T=1-120"/>
</dbReference>
<dbReference type="PDB" id="3CCE">
    <property type="method" value="X-ray"/>
    <property type="resolution" value="2.75 A"/>
    <property type="chains" value="T=1-120"/>
</dbReference>
<dbReference type="PDB" id="3CCJ">
    <property type="method" value="X-ray"/>
    <property type="resolution" value="2.70 A"/>
    <property type="chains" value="T=1-120"/>
</dbReference>
<dbReference type="PDB" id="3CCL">
    <property type="method" value="X-ray"/>
    <property type="resolution" value="2.90 A"/>
    <property type="chains" value="T=1-120"/>
</dbReference>
<dbReference type="PDB" id="3CCM">
    <property type="method" value="X-ray"/>
    <property type="resolution" value="2.55 A"/>
    <property type="chains" value="T=1-120"/>
</dbReference>
<dbReference type="PDB" id="3CCQ">
    <property type="method" value="X-ray"/>
    <property type="resolution" value="2.90 A"/>
    <property type="chains" value="T=1-120"/>
</dbReference>
<dbReference type="PDB" id="3CCR">
    <property type="method" value="X-ray"/>
    <property type="resolution" value="3.00 A"/>
    <property type="chains" value="T=1-120"/>
</dbReference>
<dbReference type="PDB" id="3CCS">
    <property type="method" value="X-ray"/>
    <property type="resolution" value="2.95 A"/>
    <property type="chains" value="T=1-120"/>
</dbReference>
<dbReference type="PDB" id="3CCU">
    <property type="method" value="X-ray"/>
    <property type="resolution" value="2.80 A"/>
    <property type="chains" value="T=1-120"/>
</dbReference>
<dbReference type="PDB" id="3CCV">
    <property type="method" value="X-ray"/>
    <property type="resolution" value="2.90 A"/>
    <property type="chains" value="T=1-120"/>
</dbReference>
<dbReference type="PDB" id="3CD6">
    <property type="method" value="X-ray"/>
    <property type="resolution" value="2.75 A"/>
    <property type="chains" value="T=1-120"/>
</dbReference>
<dbReference type="PDB" id="3CMA">
    <property type="method" value="X-ray"/>
    <property type="resolution" value="2.80 A"/>
    <property type="chains" value="T=1-120"/>
</dbReference>
<dbReference type="PDB" id="3CME">
    <property type="method" value="X-ray"/>
    <property type="resolution" value="2.95 A"/>
    <property type="chains" value="T=1-120"/>
</dbReference>
<dbReference type="PDB" id="3CPW">
    <property type="method" value="X-ray"/>
    <property type="resolution" value="2.70 A"/>
    <property type="chains" value="S=1-120"/>
</dbReference>
<dbReference type="PDB" id="3CXC">
    <property type="method" value="X-ray"/>
    <property type="resolution" value="3.00 A"/>
    <property type="chains" value="S=2-120"/>
</dbReference>
<dbReference type="PDB" id="3G4S">
    <property type="method" value="X-ray"/>
    <property type="resolution" value="3.20 A"/>
    <property type="chains" value="T=2-120"/>
</dbReference>
<dbReference type="PDB" id="3G6E">
    <property type="method" value="X-ray"/>
    <property type="resolution" value="2.70 A"/>
    <property type="chains" value="T=2-120"/>
</dbReference>
<dbReference type="PDB" id="3G71">
    <property type="method" value="X-ray"/>
    <property type="resolution" value="2.85 A"/>
    <property type="chains" value="T=2-120"/>
</dbReference>
<dbReference type="PDB" id="3I55">
    <property type="method" value="X-ray"/>
    <property type="resolution" value="3.11 A"/>
    <property type="chains" value="T=1-120"/>
</dbReference>
<dbReference type="PDB" id="3I56">
    <property type="method" value="X-ray"/>
    <property type="resolution" value="2.90 A"/>
    <property type="chains" value="T=1-120"/>
</dbReference>
<dbReference type="PDB" id="3OW2">
    <property type="method" value="X-ray"/>
    <property type="resolution" value="2.70 A"/>
    <property type="chains" value="S=2-120"/>
</dbReference>
<dbReference type="PDB" id="4ADX">
    <property type="method" value="EM"/>
    <property type="resolution" value="6.60 A"/>
    <property type="chains" value="T=1-120"/>
</dbReference>
<dbReference type="PDB" id="4V42">
    <property type="method" value="X-ray"/>
    <property type="resolution" value="5.50 A"/>
    <property type="chains" value="BU=2-120"/>
</dbReference>
<dbReference type="PDB" id="4V4R">
    <property type="method" value="X-ray"/>
    <property type="resolution" value="5.90 A"/>
    <property type="chains" value="Y=2-120"/>
</dbReference>
<dbReference type="PDB" id="4V4S">
    <property type="method" value="X-ray"/>
    <property type="resolution" value="6.76 A"/>
    <property type="chains" value="BY=2-120"/>
</dbReference>
<dbReference type="PDB" id="4V4T">
    <property type="method" value="X-ray"/>
    <property type="resolution" value="6.46 A"/>
    <property type="chains" value="Y=2-120"/>
</dbReference>
<dbReference type="PDB" id="4V9F">
    <property type="method" value="X-ray"/>
    <property type="resolution" value="2.40 A"/>
    <property type="chains" value="T=1-120"/>
</dbReference>
<dbReference type="PDBsum" id="1FFK"/>
<dbReference type="PDBsum" id="1JJ2"/>
<dbReference type="PDBsum" id="1K73"/>
<dbReference type="PDBsum" id="1K8A"/>
<dbReference type="PDBsum" id="1K9M"/>
<dbReference type="PDBsum" id="1KC8"/>
<dbReference type="PDBsum" id="1KD1"/>
<dbReference type="PDBsum" id="1KQS"/>
<dbReference type="PDBsum" id="1M1K"/>
<dbReference type="PDBsum" id="1M90"/>
<dbReference type="PDBsum" id="1ML5"/>
<dbReference type="PDBsum" id="1N8R"/>
<dbReference type="PDBsum" id="1NJI"/>
<dbReference type="PDBsum" id="1Q7Y"/>
<dbReference type="PDBsum" id="1Q81"/>
<dbReference type="PDBsum" id="1Q82"/>
<dbReference type="PDBsum" id="1Q86"/>
<dbReference type="PDBsum" id="1QVF"/>
<dbReference type="PDBsum" id="1QVG"/>
<dbReference type="PDBsum" id="1S72"/>
<dbReference type="PDBsum" id="1VQ4"/>
<dbReference type="PDBsum" id="1VQ5"/>
<dbReference type="PDBsum" id="1VQ6"/>
<dbReference type="PDBsum" id="1VQ7"/>
<dbReference type="PDBsum" id="1VQ8"/>
<dbReference type="PDBsum" id="1VQ9"/>
<dbReference type="PDBsum" id="1VQK"/>
<dbReference type="PDBsum" id="1VQL"/>
<dbReference type="PDBsum" id="1VQM"/>
<dbReference type="PDBsum" id="1VQN"/>
<dbReference type="PDBsum" id="1VQO"/>
<dbReference type="PDBsum" id="1VQP"/>
<dbReference type="PDBsum" id="1W2B"/>
<dbReference type="PDBsum" id="1YHQ"/>
<dbReference type="PDBsum" id="1YI2"/>
<dbReference type="PDBsum" id="1YIJ"/>
<dbReference type="PDBsum" id="1YIT"/>
<dbReference type="PDBsum" id="1YJ9"/>
<dbReference type="PDBsum" id="1YJN"/>
<dbReference type="PDBsum" id="1YJW"/>
<dbReference type="PDBsum" id="2OTJ"/>
<dbReference type="PDBsum" id="2OTL"/>
<dbReference type="PDBsum" id="2QA4"/>
<dbReference type="PDBsum" id="2QEX"/>
<dbReference type="PDBsum" id="3CC2"/>
<dbReference type="PDBsum" id="3CC4"/>
<dbReference type="PDBsum" id="3CC7"/>
<dbReference type="PDBsum" id="3CCE"/>
<dbReference type="PDBsum" id="3CCJ"/>
<dbReference type="PDBsum" id="3CCL"/>
<dbReference type="PDBsum" id="3CCM"/>
<dbReference type="PDBsum" id="3CCQ"/>
<dbReference type="PDBsum" id="3CCR"/>
<dbReference type="PDBsum" id="3CCS"/>
<dbReference type="PDBsum" id="3CCU"/>
<dbReference type="PDBsum" id="3CCV"/>
<dbReference type="PDBsum" id="3CD6"/>
<dbReference type="PDBsum" id="3CMA"/>
<dbReference type="PDBsum" id="3CME"/>
<dbReference type="PDBsum" id="3CPW"/>
<dbReference type="PDBsum" id="3CXC"/>
<dbReference type="PDBsum" id="3G4S"/>
<dbReference type="PDBsum" id="3G6E"/>
<dbReference type="PDBsum" id="3G71"/>
<dbReference type="PDBsum" id="3I55"/>
<dbReference type="PDBsum" id="3I56"/>
<dbReference type="PDBsum" id="3OW2"/>
<dbReference type="PDBsum" id="4ADX"/>
<dbReference type="PDBsum" id="4V42"/>
<dbReference type="PDBsum" id="4V4R"/>
<dbReference type="PDBsum" id="4V4S"/>
<dbReference type="PDBsum" id="4V4T"/>
<dbReference type="PDBsum" id="4V9F"/>
<dbReference type="SMR" id="P10972"/>
<dbReference type="IntAct" id="P10972">
    <property type="interactions" value="3"/>
</dbReference>
<dbReference type="STRING" id="272569.rrnAC1601"/>
<dbReference type="PaxDb" id="272569-rrnAC1601"/>
<dbReference type="EnsemblBacteria" id="AAV46518">
    <property type="protein sequence ID" value="AAV46518"/>
    <property type="gene ID" value="rrnAC1601"/>
</dbReference>
<dbReference type="KEGG" id="hma:rrnAC1601"/>
<dbReference type="PATRIC" id="fig|272569.17.peg.2290"/>
<dbReference type="eggNOG" id="arCOG04094">
    <property type="taxonomic scope" value="Archaea"/>
</dbReference>
<dbReference type="HOGENOM" id="CLU_093240_2_1_2"/>
<dbReference type="EvolutionaryTrace" id="P10972"/>
<dbReference type="Proteomes" id="UP000001169">
    <property type="component" value="Chromosome I"/>
</dbReference>
<dbReference type="GO" id="GO:0015934">
    <property type="term" value="C:large ribosomal subunit"/>
    <property type="evidence" value="ECO:0007669"/>
    <property type="project" value="InterPro"/>
</dbReference>
<dbReference type="GO" id="GO:0019843">
    <property type="term" value="F:rRNA binding"/>
    <property type="evidence" value="ECO:0007669"/>
    <property type="project" value="UniProtKB-UniRule"/>
</dbReference>
<dbReference type="GO" id="GO:0003735">
    <property type="term" value="F:structural constituent of ribosome"/>
    <property type="evidence" value="ECO:0007669"/>
    <property type="project" value="InterPro"/>
</dbReference>
<dbReference type="GO" id="GO:0006412">
    <property type="term" value="P:translation"/>
    <property type="evidence" value="ECO:0007669"/>
    <property type="project" value="UniProtKB-UniRule"/>
</dbReference>
<dbReference type="CDD" id="cd06089">
    <property type="entry name" value="KOW_RPL26"/>
    <property type="match status" value="1"/>
</dbReference>
<dbReference type="Gene3D" id="2.30.30.30">
    <property type="match status" value="1"/>
</dbReference>
<dbReference type="HAMAP" id="MF_01326_A">
    <property type="entry name" value="Ribosomal_uL24_A"/>
    <property type="match status" value="1"/>
</dbReference>
<dbReference type="InterPro" id="IPR005824">
    <property type="entry name" value="KOW"/>
</dbReference>
<dbReference type="InterPro" id="IPR014722">
    <property type="entry name" value="Rib_uL2_dom2"/>
</dbReference>
<dbReference type="InterPro" id="IPR005825">
    <property type="entry name" value="Ribosomal_uL24_CS"/>
</dbReference>
<dbReference type="InterPro" id="IPR005756">
    <property type="entry name" value="Ribosomal_uL24_euk/arc"/>
</dbReference>
<dbReference type="InterPro" id="IPR041988">
    <property type="entry name" value="Ribosomal_uL24_KOW"/>
</dbReference>
<dbReference type="InterPro" id="IPR008991">
    <property type="entry name" value="Translation_prot_SH3-like_sf"/>
</dbReference>
<dbReference type="NCBIfam" id="TIGR01080">
    <property type="entry name" value="rplX_A_E"/>
    <property type="match status" value="1"/>
</dbReference>
<dbReference type="PANTHER" id="PTHR11143">
    <property type="entry name" value="60S RIBOSOMAL PROTEIN L26 FAMILY MEMBER"/>
    <property type="match status" value="1"/>
</dbReference>
<dbReference type="Pfam" id="PF00467">
    <property type="entry name" value="KOW"/>
    <property type="match status" value="1"/>
</dbReference>
<dbReference type="Pfam" id="PF16906">
    <property type="entry name" value="Ribosomal_L26"/>
    <property type="match status" value="1"/>
</dbReference>
<dbReference type="SMART" id="SM00739">
    <property type="entry name" value="KOW"/>
    <property type="match status" value="1"/>
</dbReference>
<dbReference type="SUPFAM" id="SSF50104">
    <property type="entry name" value="Translation proteins SH3-like domain"/>
    <property type="match status" value="1"/>
</dbReference>
<dbReference type="PROSITE" id="PS01108">
    <property type="entry name" value="RIBOSOMAL_L24"/>
    <property type="match status" value="1"/>
</dbReference>
<proteinExistence type="evidence at protein level"/>
<evidence type="ECO:0000250" key="1"/>
<evidence type="ECO:0000256" key="2">
    <source>
        <dbReference type="SAM" id="MobiDB-lite"/>
    </source>
</evidence>
<evidence type="ECO:0000269" key="3">
    <source>
    </source>
</evidence>
<evidence type="ECO:0000269" key="4">
    <source>
    </source>
</evidence>
<evidence type="ECO:0000269" key="5">
    <source>
    </source>
</evidence>
<evidence type="ECO:0000269" key="6">
    <source>
    </source>
</evidence>
<evidence type="ECO:0000305" key="7"/>
<evidence type="ECO:0007829" key="8">
    <source>
        <dbReference type="PDB" id="1VQ8"/>
    </source>
</evidence>
<evidence type="ECO:0007829" key="9">
    <source>
        <dbReference type="PDB" id="1VQO"/>
    </source>
</evidence>
<organism>
    <name type="scientific">Haloarcula marismortui (strain ATCC 43049 / DSM 3752 / JCM 8966 / VKM B-1809)</name>
    <name type="common">Halobacterium marismortui</name>
    <dbReference type="NCBI Taxonomy" id="272569"/>
    <lineage>
        <taxon>Archaea</taxon>
        <taxon>Methanobacteriati</taxon>
        <taxon>Methanobacteriota</taxon>
        <taxon>Stenosarchaea group</taxon>
        <taxon>Halobacteria</taxon>
        <taxon>Halobacteriales</taxon>
        <taxon>Haloarculaceae</taxon>
        <taxon>Haloarcula</taxon>
    </lineage>
</organism>
<feature type="initiator methionine" description="Removed" evidence="5 6">
    <location>
        <position position="1"/>
    </location>
</feature>
<feature type="chain" id="PRO_0000130767" description="Large ribosomal subunit protein uL24">
    <location>
        <begin position="2"/>
        <end position="120"/>
    </location>
</feature>
<feature type="region of interest" description="Disordered" evidence="2">
    <location>
        <begin position="1"/>
        <end position="26"/>
    </location>
</feature>
<feature type="compositionally biased region" description="Basic residues" evidence="2">
    <location>
        <begin position="10"/>
        <end position="24"/>
    </location>
</feature>
<feature type="sequence conflict" description="In Ref. 3; AA sequence." evidence="7" ref="3">
    <original>H</original>
    <variation>R</variation>
    <location>
        <position position="21"/>
    </location>
</feature>
<feature type="helix" evidence="8">
    <location>
        <begin position="5"/>
        <end position="13"/>
    </location>
</feature>
<feature type="helix" evidence="8">
    <location>
        <begin position="17"/>
        <end position="19"/>
    </location>
</feature>
<feature type="helix" evidence="8">
    <location>
        <begin position="21"/>
        <end position="24"/>
    </location>
</feature>
<feature type="strand" evidence="8">
    <location>
        <begin position="25"/>
        <end position="28"/>
    </location>
</feature>
<feature type="helix" evidence="8">
    <location>
        <begin position="30"/>
        <end position="36"/>
    </location>
</feature>
<feature type="strand" evidence="8">
    <location>
        <begin position="39"/>
        <end position="42"/>
    </location>
</feature>
<feature type="strand" evidence="8">
    <location>
        <begin position="48"/>
        <end position="51"/>
    </location>
</feature>
<feature type="turn" evidence="8">
    <location>
        <begin position="55"/>
        <end position="58"/>
    </location>
</feature>
<feature type="strand" evidence="8">
    <location>
        <begin position="60"/>
        <end position="67"/>
    </location>
</feature>
<feature type="turn" evidence="8">
    <location>
        <begin position="68"/>
        <end position="71"/>
    </location>
</feature>
<feature type="strand" evidence="8">
    <location>
        <begin position="72"/>
        <end position="75"/>
    </location>
</feature>
<feature type="strand" evidence="8">
    <location>
        <begin position="79"/>
        <end position="81"/>
    </location>
</feature>
<feature type="strand" evidence="8">
    <location>
        <begin position="83"/>
        <end position="85"/>
    </location>
</feature>
<feature type="strand" evidence="8">
    <location>
        <begin position="87"/>
        <end position="89"/>
    </location>
</feature>
<feature type="helix" evidence="8">
    <location>
        <begin position="94"/>
        <end position="96"/>
    </location>
</feature>
<feature type="strand" evidence="8">
    <location>
        <begin position="97"/>
        <end position="101"/>
    </location>
</feature>
<feature type="helix" evidence="8">
    <location>
        <begin position="107"/>
        <end position="114"/>
    </location>
</feature>
<feature type="strand" evidence="9">
    <location>
        <begin position="116"/>
        <end position="118"/>
    </location>
</feature>
<name>RL24_HALMA</name>
<accession>P10972</accession>
<accession>Q5V1T4</accession>
<reference key="1">
    <citation type="journal article" date="1990" name="FEBS Lett.">
        <title>Nucleotide sequence of four genes encoding ribosomal proteins from the 'S10 and spectinomycin' operon equivalent region in the archaebacterium Halobacterium marismortui.</title>
        <authorList>
            <person name="Arndt E."/>
        </authorList>
    </citation>
    <scope>NUCLEOTIDE SEQUENCE [GENOMIC DNA]</scope>
</reference>
<reference key="2">
    <citation type="journal article" date="2004" name="Genome Res.">
        <title>Genome sequence of Haloarcula marismortui: a halophilic archaeon from the Dead Sea.</title>
        <authorList>
            <person name="Baliga N.S."/>
            <person name="Bonneau R."/>
            <person name="Facciotti M.T."/>
            <person name="Pan M."/>
            <person name="Glusman G."/>
            <person name="Deutsch E.W."/>
            <person name="Shannon P."/>
            <person name="Chiu Y."/>
            <person name="Weng R.S."/>
            <person name="Gan R.R."/>
            <person name="Hung P."/>
            <person name="Date S.V."/>
            <person name="Marcotte E."/>
            <person name="Hood L."/>
            <person name="Ng W.V."/>
        </authorList>
    </citation>
    <scope>NUCLEOTIDE SEQUENCE [LARGE SCALE GENOMIC DNA]</scope>
    <source>
        <strain>ATCC 43049 / DSM 3752 / JCM 8966 / VKM B-1809</strain>
    </source>
</reference>
<reference key="3">
    <citation type="journal article" date="1988" name="FEBS Lett.">
        <title>The primary structures of ribosomal proteins L16, L23 and L33 from the archaebacterium Halobacterium marismortui.</title>
        <authorList>
            <person name="Hatakeyama T."/>
            <person name="Hatakeyama T."/>
            <person name="Kimura M."/>
        </authorList>
    </citation>
    <scope>PROTEIN SEQUENCE OF 2-120</scope>
</reference>
<reference key="4">
    <citation type="journal article" date="1988" name="Biochemistry">
        <title>Extended N-terminal sequencing of proteins of archaebacterial ribosomes blotted from two-dimensional gels onto glass fiber and poly(vinylidene difluoride) membrane.</title>
        <authorList>
            <person name="Walsh M.J."/>
            <person name="McDougall J."/>
            <person name="Wittmann-Liebold B."/>
        </authorList>
    </citation>
    <scope>PROTEIN SEQUENCE OF 2-18</scope>
</reference>
<reference key="5">
    <citation type="journal article" date="2000" name="Science">
        <title>The complete atomic structure of the large ribosomal subunit at 2.4 A resolution.</title>
        <authorList>
            <person name="Ban N."/>
            <person name="Nissen P."/>
            <person name="Hansen J."/>
            <person name="Moore P.B."/>
            <person name="Steitz T.A."/>
        </authorList>
    </citation>
    <scope>X-RAY CRYSTALLOGRAPHY (2.4 ANGSTROMS) OF THE 50S SUBUNIT</scope>
    <source>
        <strain>ATCC 43049 / DSM 3752 / JCM 8966 / VKM B-1809</strain>
    </source>
</reference>
<reference key="6">
    <citation type="journal article" date="2000" name="Science">
        <title>The structural basis of ribosome activity in peptide bond synthesis.</title>
        <authorList>
            <person name="Nissen P."/>
            <person name="Hansen J."/>
            <person name="Ban N."/>
            <person name="Moore P.B."/>
            <person name="Steitz T.A."/>
        </authorList>
    </citation>
    <scope>X-RAY CRYSTALLOGRAPHY (3.0 ANGSTROMS) OF THE 50S SUBUNIT</scope>
    <source>
        <strain>ATCC 43049 / DSM 3752 / JCM 8966 / VKM B-1809</strain>
    </source>
</reference>
<reference key="7">
    <citation type="journal article" date="2002" name="Nat. Struct. Biol.">
        <title>A pre-translocational intermediate in protein synthesis observed in crystals of enzymatically active 50S subunits.</title>
        <authorList>
            <person name="Schmeing T.M."/>
            <person name="Seila A.C."/>
            <person name="Hansen J.L."/>
            <person name="Freeborn B."/>
            <person name="Soukup J.K."/>
            <person name="Scaringe S.A."/>
            <person name="Strobel S.A."/>
            <person name="Moore P.B."/>
            <person name="Steitz T.A."/>
        </authorList>
    </citation>
    <scope>X-RAY CRYSTALLOGRAPHY (3.1 ANGSTROMS) OF THE 50S SUBUNIT</scope>
    <source>
        <strain>ATCC 43049 / DSM 3752 / JCM 8966 / VKM B-1809</strain>
    </source>
</reference>
<reference key="8">
    <citation type="journal article" date="2001" name="EMBO J.">
        <title>The kink-turn: a new RNA secondary structure motif.</title>
        <authorList>
            <person name="Klein D.J."/>
            <person name="Schmeing T.M."/>
            <person name="Moore P.B."/>
            <person name="Steitz T.A."/>
        </authorList>
    </citation>
    <scope>X-RAY CRYSTALLOGRAPHY (2.4 ANGSTROMS) OF THE 50S SUBUNIT</scope>
    <source>
        <strain>ATCC 43049 / DSM 3752 / JCM 8966 / VKM B-1809</strain>
    </source>
</reference>
<reference key="9">
    <citation type="journal article" date="2002" name="Mol. Cell">
        <title>The structures of four macrolide antibiotics bound to the large ribosomal subunit.</title>
        <authorList>
            <person name="Hansen J.L."/>
            <person name="Ippolito J.A."/>
            <person name="Ban N."/>
            <person name="Nissen P."/>
            <person name="Moore P.B."/>
            <person name="Steitz T.A."/>
        </authorList>
    </citation>
    <scope>X-RAY CRYSTALLOGRAPHY (3.0 ANGSTROMS) OF THE 50S SUBUNIT IN COMPLEX WITH FOUR MACROLIDE ANTIBIOTICS</scope>
    <source>
        <strain>ATCC 43049 / DSM 3752 / JCM 8966 / VKM B-1809</strain>
    </source>
</reference>
<reference key="10">
    <citation type="journal article" date="2002" name="Proc. Natl. Acad. Sci. U.S.A.">
        <title>Structural insights into peptide bond formation.</title>
        <authorList>
            <person name="Hansen J.L."/>
            <person name="Schmeing T.M."/>
            <person name="Moore P.B."/>
            <person name="Steitz T.A."/>
        </authorList>
    </citation>
    <scope>X-RAY CRYSTALLOGRAPHY (2.8 ANGSTROMS) OF THE 50S SUBUNIT</scope>
    <source>
        <strain>ATCC 43049 / DSM 3752 / JCM 8966 / VKM B-1809</strain>
    </source>
</reference>
<reference key="11">
    <citation type="journal article" date="2003" name="J. Mol. Biol.">
        <title>Structures of five antibiotics bound at the peptidyl transferase center of the large ribosomal subunit.</title>
        <authorList>
            <person name="Hansen J.L."/>
            <person name="Moore P.B."/>
            <person name="Steitz T.A."/>
        </authorList>
    </citation>
    <scope>X-RAY CRYSTALLOGRAPHY (3.0 ANGSTROMS) OF THE 50S SUBUNIT IN COMPLEX WITH FIVE ANTIBIOTICS AT THE PEPTIDYL TRANSFERASE CENTER</scope>
    <source>
        <strain>ATCC 43049 / DSM 3752 / JCM 8966 / VKM B-1809</strain>
    </source>
</reference>
<reference key="12">
    <citation type="journal article" date="2003" name="RNA">
        <title>Structures of deacylated tRNA mimics bound to the E site of the large ribosomal subunit.</title>
        <authorList>
            <person name="Schmeing T.M."/>
            <person name="Moore P.B."/>
            <person name="Steitz T.A."/>
        </authorList>
    </citation>
    <scope>X-RAY CRYSTALLOGRAPHY (2.9 ANGSTROMS) OF THE 50S SUBUNIT WITH TWO DIFFERENT E SITE SUBSTRATES</scope>
</reference>
<reference key="13">
    <citation type="journal article" date="2013" name="Acta Crystallogr. D">
        <title>Revisiting the Haloarcula marismortui 50S ribosomal subunit model.</title>
        <authorList>
            <person name="Gabdulkhakov A."/>
            <person name="Nikonov S."/>
            <person name="Garber M."/>
        </authorList>
    </citation>
    <scope>X-RAY CRYSTALLOGRAPHY (2.4 ANGSTROMS) OF THE 50S SUBUNIT</scope>
</reference>
<comment type="function">
    <text evidence="1">One of two assembly initiator proteins, it binds directly to the 5'-end of the 23S rRNA, where it nucleates assembly of the 50S subunit.</text>
</comment>
<comment type="function">
    <text>Stabilizes the tertiary rRNA structure within the 23S rRNA domain (domain I) to which it binds. Located at the polypeptide exit tunnel on the outside of the subunit.</text>
</comment>
<comment type="subunit">
    <text evidence="3 4">Part of the 50S ribosomal subunit. Interacts weakly with protein L4.</text>
</comment>
<comment type="similarity">
    <text evidence="7">Belongs to the universal ribosomal protein uL24 family.</text>
</comment>
<protein>
    <recommendedName>
        <fullName evidence="7">Large ribosomal subunit protein uL24</fullName>
    </recommendedName>
    <alternativeName>
        <fullName>50S ribosomal protein L24</fullName>
    </alternativeName>
    <alternativeName>
        <fullName>Hl15</fullName>
    </alternativeName>
    <alternativeName>
        <fullName>Hl16</fullName>
    </alternativeName>
    <alternativeName>
        <fullName>Hmal24</fullName>
    </alternativeName>
</protein>
<keyword id="KW-0002">3D-structure</keyword>
<keyword id="KW-0903">Direct protein sequencing</keyword>
<keyword id="KW-1185">Reference proteome</keyword>
<keyword id="KW-0687">Ribonucleoprotein</keyword>
<keyword id="KW-0689">Ribosomal protein</keyword>
<keyword id="KW-0694">RNA-binding</keyword>
<keyword id="KW-0699">rRNA-binding</keyword>